<evidence type="ECO:0000255" key="1">
    <source>
        <dbReference type="HAMAP-Rule" id="MF_00312"/>
    </source>
</evidence>
<accession>A7IAU9</accession>
<sequence>MEIAVIGNSEFILGFRLAGIRKTYTAENDEKLLESVNSVLADGQVGILVLNSSDMERLPRRLRTTLENSVKPTVIALGGEEGGLSMRERIKRSVGVDLWK</sequence>
<proteinExistence type="inferred from homology"/>
<comment type="function">
    <text evidence="1">Component of the A-type ATP synthase that produces ATP from ADP in the presence of a proton gradient across the membrane.</text>
</comment>
<comment type="subunit">
    <text evidence="1">Has multiple subunits with at least A(3), B(3), C, D, E, F, H, I and proteolipid K(x).</text>
</comment>
<comment type="subcellular location">
    <subcellularLocation>
        <location evidence="1">Cell membrane</location>
        <topology evidence="1">Peripheral membrane protein</topology>
    </subcellularLocation>
</comment>
<comment type="similarity">
    <text evidence="1">Belongs to the V-ATPase F subunit family.</text>
</comment>
<name>AATF_METB6</name>
<keyword id="KW-0066">ATP synthesis</keyword>
<keyword id="KW-1003">Cell membrane</keyword>
<keyword id="KW-0375">Hydrogen ion transport</keyword>
<keyword id="KW-0406">Ion transport</keyword>
<keyword id="KW-0472">Membrane</keyword>
<keyword id="KW-1185">Reference proteome</keyword>
<keyword id="KW-0813">Transport</keyword>
<reference key="1">
    <citation type="journal article" date="2015" name="Microbiology">
        <title>Genome of Methanoregula boonei 6A8 reveals adaptations to oligotrophic peatland environments.</title>
        <authorList>
            <person name="Braeuer S."/>
            <person name="Cadillo-Quiroz H."/>
            <person name="Kyrpides N."/>
            <person name="Woyke T."/>
            <person name="Goodwin L."/>
            <person name="Detter C."/>
            <person name="Podell S."/>
            <person name="Yavitt J.B."/>
            <person name="Zinder S.H."/>
        </authorList>
    </citation>
    <scope>NUCLEOTIDE SEQUENCE [LARGE SCALE GENOMIC DNA]</scope>
    <source>
        <strain>DSM 21154 / JCM 14090 / 6A8</strain>
    </source>
</reference>
<protein>
    <recommendedName>
        <fullName evidence="1">A-type ATP synthase subunit F</fullName>
    </recommendedName>
</protein>
<gene>
    <name evidence="1" type="primary">atpF</name>
    <name type="ordered locus">Mboo_2346</name>
</gene>
<feature type="chain" id="PRO_1000059426" description="A-type ATP synthase subunit F">
    <location>
        <begin position="1"/>
        <end position="100"/>
    </location>
</feature>
<dbReference type="EMBL" id="CP000780">
    <property type="protein sequence ID" value="ABS56860.1"/>
    <property type="molecule type" value="Genomic_DNA"/>
</dbReference>
<dbReference type="RefSeq" id="WP_012107921.1">
    <property type="nucleotide sequence ID" value="NC_009712.1"/>
</dbReference>
<dbReference type="SMR" id="A7IAU9"/>
<dbReference type="STRING" id="456442.Mboo_2346"/>
<dbReference type="GeneID" id="5411875"/>
<dbReference type="KEGG" id="mbn:Mboo_2346"/>
<dbReference type="eggNOG" id="arCOG04102">
    <property type="taxonomic scope" value="Archaea"/>
</dbReference>
<dbReference type="HOGENOM" id="CLU_135754_2_2_2"/>
<dbReference type="OrthoDB" id="24971at2157"/>
<dbReference type="Proteomes" id="UP000002408">
    <property type="component" value="Chromosome"/>
</dbReference>
<dbReference type="GO" id="GO:0005886">
    <property type="term" value="C:plasma membrane"/>
    <property type="evidence" value="ECO:0007669"/>
    <property type="project" value="UniProtKB-SubCell"/>
</dbReference>
<dbReference type="GO" id="GO:0005524">
    <property type="term" value="F:ATP binding"/>
    <property type="evidence" value="ECO:0007669"/>
    <property type="project" value="UniProtKB-UniRule"/>
</dbReference>
<dbReference type="GO" id="GO:0046933">
    <property type="term" value="F:proton-transporting ATP synthase activity, rotational mechanism"/>
    <property type="evidence" value="ECO:0007669"/>
    <property type="project" value="UniProtKB-UniRule"/>
</dbReference>
<dbReference type="GO" id="GO:0046961">
    <property type="term" value="F:proton-transporting ATPase activity, rotational mechanism"/>
    <property type="evidence" value="ECO:0007669"/>
    <property type="project" value="InterPro"/>
</dbReference>
<dbReference type="GO" id="GO:0042777">
    <property type="term" value="P:proton motive force-driven plasma membrane ATP synthesis"/>
    <property type="evidence" value="ECO:0007669"/>
    <property type="project" value="UniProtKB-UniRule"/>
</dbReference>
<dbReference type="Gene3D" id="3.40.50.10580">
    <property type="entry name" value="ATPase, V1 complex, subunit F"/>
    <property type="match status" value="1"/>
</dbReference>
<dbReference type="HAMAP" id="MF_00312">
    <property type="entry name" value="ATP_synth_F_arch"/>
    <property type="match status" value="1"/>
</dbReference>
<dbReference type="InterPro" id="IPR008218">
    <property type="entry name" value="ATPase_V1-cplx_f_g_su"/>
</dbReference>
<dbReference type="InterPro" id="IPR022944">
    <property type="entry name" value="ATPase_V1-cplx_fsu_bac/arc"/>
</dbReference>
<dbReference type="InterPro" id="IPR036906">
    <property type="entry name" value="ATPase_V1_fsu_sf"/>
</dbReference>
<dbReference type="NCBIfam" id="NF002577">
    <property type="entry name" value="PRK02228.1"/>
    <property type="match status" value="1"/>
</dbReference>
<dbReference type="Pfam" id="PF01990">
    <property type="entry name" value="ATP-synt_F"/>
    <property type="match status" value="1"/>
</dbReference>
<dbReference type="SUPFAM" id="SSF159468">
    <property type="entry name" value="AtpF-like"/>
    <property type="match status" value="1"/>
</dbReference>
<organism>
    <name type="scientific">Methanoregula boonei (strain DSM 21154 / JCM 14090 / 6A8)</name>
    <dbReference type="NCBI Taxonomy" id="456442"/>
    <lineage>
        <taxon>Archaea</taxon>
        <taxon>Methanobacteriati</taxon>
        <taxon>Methanobacteriota</taxon>
        <taxon>Stenosarchaea group</taxon>
        <taxon>Methanomicrobia</taxon>
        <taxon>Methanomicrobiales</taxon>
        <taxon>Methanoregulaceae</taxon>
        <taxon>Methanoregula</taxon>
    </lineage>
</organism>